<name>RNFE_VIBCM</name>
<dbReference type="EC" id="7.-.-.-" evidence="1"/>
<dbReference type="EMBL" id="CP001233">
    <property type="protein sequence ID" value="ACP05286.1"/>
    <property type="molecule type" value="Genomic_DNA"/>
</dbReference>
<dbReference type="RefSeq" id="WP_001005002.1">
    <property type="nucleotide sequence ID" value="NC_012578.1"/>
</dbReference>
<dbReference type="SMR" id="C3LTR0"/>
<dbReference type="KEGG" id="vcm:VCM66_0968"/>
<dbReference type="HOGENOM" id="CLU_046659_1_0_6"/>
<dbReference type="Proteomes" id="UP000001217">
    <property type="component" value="Chromosome I"/>
</dbReference>
<dbReference type="GO" id="GO:0005886">
    <property type="term" value="C:plasma membrane"/>
    <property type="evidence" value="ECO:0007669"/>
    <property type="project" value="UniProtKB-SubCell"/>
</dbReference>
<dbReference type="GO" id="GO:0022900">
    <property type="term" value="P:electron transport chain"/>
    <property type="evidence" value="ECO:0007669"/>
    <property type="project" value="UniProtKB-UniRule"/>
</dbReference>
<dbReference type="HAMAP" id="MF_00478">
    <property type="entry name" value="RsxE_RnfE"/>
    <property type="match status" value="1"/>
</dbReference>
<dbReference type="InterPro" id="IPR003667">
    <property type="entry name" value="NqrDE/RnfAE"/>
</dbReference>
<dbReference type="InterPro" id="IPR010968">
    <property type="entry name" value="RnfE"/>
</dbReference>
<dbReference type="NCBIfam" id="NF009070">
    <property type="entry name" value="PRK12405.1"/>
    <property type="match status" value="1"/>
</dbReference>
<dbReference type="NCBIfam" id="TIGR01948">
    <property type="entry name" value="rnfE"/>
    <property type="match status" value="1"/>
</dbReference>
<dbReference type="PANTHER" id="PTHR30586">
    <property type="entry name" value="ELECTRON TRANSPORT COMPLEX PROTEIN RNFE"/>
    <property type="match status" value="1"/>
</dbReference>
<dbReference type="PANTHER" id="PTHR30586:SF0">
    <property type="entry name" value="ION-TRANSLOCATING OXIDOREDUCTASE COMPLEX SUBUNIT E"/>
    <property type="match status" value="1"/>
</dbReference>
<dbReference type="Pfam" id="PF02508">
    <property type="entry name" value="Rnf-Nqr"/>
    <property type="match status" value="1"/>
</dbReference>
<dbReference type="PIRSF" id="PIRSF006102">
    <property type="entry name" value="NQR_DE"/>
    <property type="match status" value="1"/>
</dbReference>
<accession>C3LTR0</accession>
<gene>
    <name evidence="1" type="primary">rnfE</name>
    <name type="ordered locus">VCM66_0968</name>
</gene>
<comment type="function">
    <text evidence="1">Part of a membrane-bound complex that couples electron transfer with translocation of ions across the membrane.</text>
</comment>
<comment type="subunit">
    <text evidence="1">The complex is composed of six subunits: RnfA, RnfB, RnfC, RnfD, RnfE and RnfG.</text>
</comment>
<comment type="subcellular location">
    <subcellularLocation>
        <location evidence="1">Cell inner membrane</location>
        <topology evidence="1">Multi-pass membrane protein</topology>
    </subcellularLocation>
</comment>
<comment type="similarity">
    <text evidence="1">Belongs to the NqrDE/RnfAE family.</text>
</comment>
<sequence length="230" mass="24710">MNENRTLMLNGMWNNNPALVQLLGLCPLLAVSSTVTNALGLGIATLLVLVGSNVTVSLVRDYVPKEVRIPVFVMIIASLVTCVQLLMNAYAYGLYLSLGIFIPLIVTNCIIIGRAEAFASKNDVLPAALDGFWMGLGMTSVLVVLGSLREIIGNGTLFDGADLLLGEWAKVLRIEVFHFDSAFLLALLPPGAFIGVGFLIAAKSVIDKQTAARQPKQQKQAIERARVTNV</sequence>
<evidence type="ECO:0000255" key="1">
    <source>
        <dbReference type="HAMAP-Rule" id="MF_00478"/>
    </source>
</evidence>
<proteinExistence type="inferred from homology"/>
<organism>
    <name type="scientific">Vibrio cholerae serotype O1 (strain M66-2)</name>
    <dbReference type="NCBI Taxonomy" id="579112"/>
    <lineage>
        <taxon>Bacteria</taxon>
        <taxon>Pseudomonadati</taxon>
        <taxon>Pseudomonadota</taxon>
        <taxon>Gammaproteobacteria</taxon>
        <taxon>Vibrionales</taxon>
        <taxon>Vibrionaceae</taxon>
        <taxon>Vibrio</taxon>
    </lineage>
</organism>
<protein>
    <recommendedName>
        <fullName evidence="1">Ion-translocating oxidoreductase complex subunit E</fullName>
        <ecNumber evidence="1">7.-.-.-</ecNumber>
    </recommendedName>
    <alternativeName>
        <fullName evidence="1">Rnf electron transport complex subunit E</fullName>
    </alternativeName>
</protein>
<reference key="1">
    <citation type="journal article" date="2008" name="PLoS ONE">
        <title>A recalibrated molecular clock and independent origins for the cholera pandemic clones.</title>
        <authorList>
            <person name="Feng L."/>
            <person name="Reeves P.R."/>
            <person name="Lan R."/>
            <person name="Ren Y."/>
            <person name="Gao C."/>
            <person name="Zhou Z."/>
            <person name="Ren Y."/>
            <person name="Cheng J."/>
            <person name="Wang W."/>
            <person name="Wang J."/>
            <person name="Qian W."/>
            <person name="Li D."/>
            <person name="Wang L."/>
        </authorList>
    </citation>
    <scope>NUCLEOTIDE SEQUENCE [LARGE SCALE GENOMIC DNA]</scope>
    <source>
        <strain>M66-2</strain>
    </source>
</reference>
<keyword id="KW-0997">Cell inner membrane</keyword>
<keyword id="KW-1003">Cell membrane</keyword>
<keyword id="KW-0249">Electron transport</keyword>
<keyword id="KW-0472">Membrane</keyword>
<keyword id="KW-1278">Translocase</keyword>
<keyword id="KW-0812">Transmembrane</keyword>
<keyword id="KW-1133">Transmembrane helix</keyword>
<keyword id="KW-0813">Transport</keyword>
<feature type="chain" id="PRO_1000135564" description="Ion-translocating oxidoreductase complex subunit E">
    <location>
        <begin position="1"/>
        <end position="230"/>
    </location>
</feature>
<feature type="transmembrane region" description="Helical" evidence="1">
    <location>
        <begin position="39"/>
        <end position="59"/>
    </location>
</feature>
<feature type="transmembrane region" description="Helical" evidence="1">
    <location>
        <begin position="69"/>
        <end position="89"/>
    </location>
</feature>
<feature type="transmembrane region" description="Helical" evidence="1">
    <location>
        <begin position="93"/>
        <end position="113"/>
    </location>
</feature>
<feature type="transmembrane region" description="Helical" evidence="1">
    <location>
        <begin position="124"/>
        <end position="144"/>
    </location>
</feature>
<feature type="transmembrane region" description="Helical" evidence="1">
    <location>
        <begin position="182"/>
        <end position="202"/>
    </location>
</feature>